<name>FLZ11_ARATH</name>
<proteinExistence type="evidence at protein level"/>
<accession>Q9SL94</accession>
<feature type="chain" id="PRO_0000445501" description="FCS-Like Zinc finger 11">
    <location>
        <begin position="1"/>
        <end position="324"/>
    </location>
</feature>
<feature type="zinc finger region" description="FLZ-type" evidence="1">
    <location>
        <begin position="266"/>
        <end position="309"/>
    </location>
</feature>
<keyword id="KW-0963">Cytoplasm</keyword>
<keyword id="KW-0479">Metal-binding</keyword>
<keyword id="KW-0539">Nucleus</keyword>
<keyword id="KW-1185">Reference proteome</keyword>
<keyword id="KW-0862">Zinc</keyword>
<keyword id="KW-0863">Zinc-finger</keyword>
<dbReference type="EMBL" id="AC006053">
    <property type="protein sequence ID" value="AAD31369.1"/>
    <property type="molecule type" value="Genomic_DNA"/>
</dbReference>
<dbReference type="EMBL" id="CP002685">
    <property type="protein sequence ID" value="AEC07736.1"/>
    <property type="molecule type" value="Genomic_DNA"/>
</dbReference>
<dbReference type="EMBL" id="CP002685">
    <property type="protein sequence ID" value="AEC07737.1"/>
    <property type="molecule type" value="Genomic_DNA"/>
</dbReference>
<dbReference type="EMBL" id="BT010878">
    <property type="protein sequence ID" value="AAR24656.1"/>
    <property type="molecule type" value="mRNA"/>
</dbReference>
<dbReference type="EMBL" id="AK175432">
    <property type="protein sequence ID" value="BAD43195.1"/>
    <property type="molecule type" value="mRNA"/>
</dbReference>
<dbReference type="PIR" id="E84651">
    <property type="entry name" value="E84651"/>
</dbReference>
<dbReference type="RefSeq" id="NP_001031415.1">
    <property type="nucleotide sequence ID" value="NM_001036338.1"/>
</dbReference>
<dbReference type="RefSeq" id="NP_180140.1">
    <property type="nucleotide sequence ID" value="NM_128128.4"/>
</dbReference>
<dbReference type="FunCoup" id="Q9SL94">
    <property type="interactions" value="3"/>
</dbReference>
<dbReference type="IntAct" id="Q9SL94">
    <property type="interactions" value="3"/>
</dbReference>
<dbReference type="STRING" id="3702.Q9SL94"/>
<dbReference type="PaxDb" id="3702-AT2G25690.2"/>
<dbReference type="EnsemblPlants" id="AT2G25690.1">
    <property type="protein sequence ID" value="AT2G25690.1"/>
    <property type="gene ID" value="AT2G25690"/>
</dbReference>
<dbReference type="EnsemblPlants" id="AT2G25690.2">
    <property type="protein sequence ID" value="AT2G25690.2"/>
    <property type="gene ID" value="AT2G25690"/>
</dbReference>
<dbReference type="GeneID" id="817110"/>
<dbReference type="Gramene" id="AT2G25690.1">
    <property type="protein sequence ID" value="AT2G25690.1"/>
    <property type="gene ID" value="AT2G25690"/>
</dbReference>
<dbReference type="Gramene" id="AT2G25690.2">
    <property type="protein sequence ID" value="AT2G25690.2"/>
    <property type="gene ID" value="AT2G25690"/>
</dbReference>
<dbReference type="KEGG" id="ath:AT2G25690"/>
<dbReference type="Araport" id="AT2G25690"/>
<dbReference type="TAIR" id="AT2G25690"/>
<dbReference type="eggNOG" id="ENOG502QWBW">
    <property type="taxonomic scope" value="Eukaryota"/>
</dbReference>
<dbReference type="HOGENOM" id="CLU_052134_2_0_1"/>
<dbReference type="InParanoid" id="Q9SL94"/>
<dbReference type="OMA" id="KVTHIFC"/>
<dbReference type="PhylomeDB" id="Q9SL94"/>
<dbReference type="PRO" id="PR:Q9SL94"/>
<dbReference type="Proteomes" id="UP000006548">
    <property type="component" value="Chromosome 2"/>
</dbReference>
<dbReference type="ExpressionAtlas" id="Q9SL94">
    <property type="expression patterns" value="baseline and differential"/>
</dbReference>
<dbReference type="GO" id="GO:0005737">
    <property type="term" value="C:cytoplasm"/>
    <property type="evidence" value="ECO:0000314"/>
    <property type="project" value="UniProtKB"/>
</dbReference>
<dbReference type="GO" id="GO:0005634">
    <property type="term" value="C:nucleus"/>
    <property type="evidence" value="ECO:0000314"/>
    <property type="project" value="UniProtKB"/>
</dbReference>
<dbReference type="GO" id="GO:0008270">
    <property type="term" value="F:zinc ion binding"/>
    <property type="evidence" value="ECO:0007669"/>
    <property type="project" value="UniProtKB-KW"/>
</dbReference>
<dbReference type="GO" id="GO:1902074">
    <property type="term" value="P:response to salt"/>
    <property type="evidence" value="ECO:0000270"/>
    <property type="project" value="UniProtKB"/>
</dbReference>
<dbReference type="GO" id="GO:0042594">
    <property type="term" value="P:response to starvation"/>
    <property type="evidence" value="ECO:0000270"/>
    <property type="project" value="UniProtKB"/>
</dbReference>
<dbReference type="InterPro" id="IPR044585">
    <property type="entry name" value="FLZ10/11"/>
</dbReference>
<dbReference type="InterPro" id="IPR007650">
    <property type="entry name" value="Zf-FLZ_dom"/>
</dbReference>
<dbReference type="PANTHER" id="PTHR46868">
    <property type="entry name" value="FCS-LIKE ZINC FINGER 11"/>
    <property type="match status" value="1"/>
</dbReference>
<dbReference type="PANTHER" id="PTHR46868:SF3">
    <property type="entry name" value="FCS-LIKE ZINC FINGER 11"/>
    <property type="match status" value="1"/>
</dbReference>
<dbReference type="Pfam" id="PF04570">
    <property type="entry name" value="zf-FLZ"/>
    <property type="match status" value="1"/>
</dbReference>
<dbReference type="PROSITE" id="PS51795">
    <property type="entry name" value="ZF_FLZ"/>
    <property type="match status" value="1"/>
</dbReference>
<evidence type="ECO:0000255" key="1">
    <source>
        <dbReference type="PROSITE-ProRule" id="PRU01131"/>
    </source>
</evidence>
<evidence type="ECO:0000269" key="2">
    <source>
    </source>
</evidence>
<evidence type="ECO:0000269" key="3">
    <source>
    </source>
</evidence>
<evidence type="ECO:0000269" key="4">
    <source>
    </source>
</evidence>
<evidence type="ECO:0000303" key="5">
    <source>
    </source>
</evidence>
<evidence type="ECO:0000303" key="6">
    <source>
    </source>
</evidence>
<evidence type="ECO:0000305" key="7"/>
<evidence type="ECO:0000312" key="8">
    <source>
        <dbReference type="Araport" id="AT2G25690"/>
    </source>
</evidence>
<evidence type="ECO:0000312" key="9">
    <source>
        <dbReference type="EMBL" id="AAD31369.1"/>
    </source>
</evidence>
<organism>
    <name type="scientific">Arabidopsis thaliana</name>
    <name type="common">Mouse-ear cress</name>
    <dbReference type="NCBI Taxonomy" id="3702"/>
    <lineage>
        <taxon>Eukaryota</taxon>
        <taxon>Viridiplantae</taxon>
        <taxon>Streptophyta</taxon>
        <taxon>Embryophyta</taxon>
        <taxon>Tracheophyta</taxon>
        <taxon>Spermatophyta</taxon>
        <taxon>Magnoliopsida</taxon>
        <taxon>eudicotyledons</taxon>
        <taxon>Gunneridae</taxon>
        <taxon>Pentapetalae</taxon>
        <taxon>rosids</taxon>
        <taxon>malvids</taxon>
        <taxon>Brassicales</taxon>
        <taxon>Brassicaceae</taxon>
        <taxon>Camelineae</taxon>
        <taxon>Arabidopsis</taxon>
    </lineage>
</organism>
<sequence>MLKTRAMFPHKDQAMSLSLDPQSDLVVGHTNNRPITNPLALSLLIGLNNKNKCISDSDFVRSPKSPLEFRVLSTMADSFFLRSPRSSLTAHLNCCCGPAAKVGLSIVDSLGDDRCLLPDIVFGPALRIKCSEVMDKHPKLLFPVANKSKKIENERSGVVFEIGDNSSETEPVGLRNRSFSANDCLRKTRVLSRSKLGQEGDFPGSGSDNAFSSEDDMEDYTCIIAHGPNPKTTHIYGDRVLECHKNELKGDEDNKEKFGSVFPSDNFLGICNFCNKKLGGGDDIYMYREKSFCSEECRSEEMMIDEEDLEEPCIDMHESLKKLF</sequence>
<comment type="function">
    <text evidence="2">May act as an adapter to facilitate the interaction of SnRK1 complex with effector proteins, conferring tissue- and stimulus-type specific differences in the SnRK1 regulation pathway.</text>
</comment>
<comment type="subunit">
    <text evidence="4">Interacts with KIN10 and KIN11 via its FLZ-type zinc finger domain (PubMed:29945970). Forms heterodimer with FLZ2 in vitro (PubMed:29945970).</text>
</comment>
<comment type="subcellular location">
    <subcellularLocation>
        <location evidence="4">Cytoplasm</location>
    </subcellularLocation>
    <subcellularLocation>
        <location evidence="4">Nucleus</location>
    </subcellularLocation>
</comment>
<comment type="induction">
    <text evidence="3">Up-regulated in response to mild as well as prolonged energy depletion (PubMed:26442059). Induced by NaCl (PubMed:26442059).</text>
</comment>
<comment type="similarity">
    <text evidence="7">Belongs to the FLZ family.</text>
</comment>
<gene>
    <name evidence="6" type="primary">FLZ11</name>
    <name evidence="5" type="synonym">DUF581-8</name>
    <name evidence="8" type="ordered locus">At2g25690</name>
    <name evidence="9" type="ORF">F3N11.14</name>
</gene>
<reference key="1">
    <citation type="journal article" date="1999" name="Nature">
        <title>Sequence and analysis of chromosome 2 of the plant Arabidopsis thaliana.</title>
        <authorList>
            <person name="Lin X."/>
            <person name="Kaul S."/>
            <person name="Rounsley S.D."/>
            <person name="Shea T.P."/>
            <person name="Benito M.-I."/>
            <person name="Town C.D."/>
            <person name="Fujii C.Y."/>
            <person name="Mason T.M."/>
            <person name="Bowman C.L."/>
            <person name="Barnstead M.E."/>
            <person name="Feldblyum T.V."/>
            <person name="Buell C.R."/>
            <person name="Ketchum K.A."/>
            <person name="Lee J.J."/>
            <person name="Ronning C.M."/>
            <person name="Koo H.L."/>
            <person name="Moffat K.S."/>
            <person name="Cronin L.A."/>
            <person name="Shen M."/>
            <person name="Pai G."/>
            <person name="Van Aken S."/>
            <person name="Umayam L."/>
            <person name="Tallon L.J."/>
            <person name="Gill J.E."/>
            <person name="Adams M.D."/>
            <person name="Carrera A.J."/>
            <person name="Creasy T.H."/>
            <person name="Goodman H.M."/>
            <person name="Somerville C.R."/>
            <person name="Copenhaver G.P."/>
            <person name="Preuss D."/>
            <person name="Nierman W.C."/>
            <person name="White O."/>
            <person name="Eisen J.A."/>
            <person name="Salzberg S.L."/>
            <person name="Fraser C.M."/>
            <person name="Venter J.C."/>
        </authorList>
    </citation>
    <scope>NUCLEOTIDE SEQUENCE [LARGE SCALE GENOMIC DNA]</scope>
    <source>
        <strain>cv. Columbia</strain>
    </source>
</reference>
<reference key="2">
    <citation type="journal article" date="2017" name="Plant J.">
        <title>Araport11: a complete reannotation of the Arabidopsis thaliana reference genome.</title>
        <authorList>
            <person name="Cheng C.Y."/>
            <person name="Krishnakumar V."/>
            <person name="Chan A.P."/>
            <person name="Thibaud-Nissen F."/>
            <person name="Schobel S."/>
            <person name="Town C.D."/>
        </authorList>
    </citation>
    <scope>GENOME REANNOTATION</scope>
    <source>
        <strain>cv. Columbia</strain>
    </source>
</reference>
<reference key="3">
    <citation type="submission" date="2003-12" db="EMBL/GenBank/DDBJ databases">
        <title>Arabidopsis ORF clones.</title>
        <authorList>
            <person name="Kim C.J."/>
            <person name="Chen H."/>
            <person name="Cheuk R.F."/>
            <person name="Shinn P."/>
            <person name="Carninci P."/>
            <person name="Hayashizaki Y."/>
            <person name="Ishida J."/>
            <person name="Kamiya A."/>
            <person name="Kawai J."/>
            <person name="Narusaka M."/>
            <person name="Sakurai T."/>
            <person name="Satou M."/>
            <person name="Seki M."/>
            <person name="Shinozaki K."/>
            <person name="Ecker J.R."/>
        </authorList>
    </citation>
    <scope>NUCLEOTIDE SEQUENCE [LARGE SCALE MRNA]</scope>
    <source>
        <strain>cv. Columbia</strain>
    </source>
</reference>
<reference key="4">
    <citation type="submission" date="2004-09" db="EMBL/GenBank/DDBJ databases">
        <title>Large-scale analysis of RIKEN Arabidopsis full-length (RAFL) cDNAs.</title>
        <authorList>
            <person name="Totoki Y."/>
            <person name="Seki M."/>
            <person name="Ishida J."/>
            <person name="Nakajima M."/>
            <person name="Enju A."/>
            <person name="Kamiya A."/>
            <person name="Narusaka M."/>
            <person name="Shin-i T."/>
            <person name="Nakagawa M."/>
            <person name="Sakamoto N."/>
            <person name="Oishi K."/>
            <person name="Kohara Y."/>
            <person name="Kobayashi M."/>
            <person name="Toyoda A."/>
            <person name="Sakaki Y."/>
            <person name="Sakurai T."/>
            <person name="Iida K."/>
            <person name="Akiyama K."/>
            <person name="Satou M."/>
            <person name="Toyoda T."/>
            <person name="Konagaya A."/>
            <person name="Carninci P."/>
            <person name="Kawai J."/>
            <person name="Hayashizaki Y."/>
            <person name="Shinozaki K."/>
        </authorList>
    </citation>
    <scope>NUCLEOTIDE SEQUENCE [LARGE SCALE MRNA]</scope>
    <source>
        <strain>cv. Columbia</strain>
    </source>
</reference>
<reference key="5">
    <citation type="journal article" date="2014" name="Front. Plant Sci.">
        <title>The complex becomes more complex: protein-protein interactions of SnRK1 with DUF581 family proteins provide a framework for cell- and stimulus type-specific SnRK1 signaling in plants.</title>
        <authorList>
            <person name="Nietzsche M."/>
            <person name="Schiessl I."/>
            <person name="Boernke F."/>
        </authorList>
    </citation>
    <scope>GENE FAMILY</scope>
    <scope>FUNCTION</scope>
</reference>
<reference key="6">
    <citation type="journal article" date="2014" name="Front. Plant Sci.">
        <title>Corrigendum: The complex becomes more complex: protein-protein interactions of SnRK1 with DUF581 family proteins provide a framework for cell- and stimulus type-specific SnRK1 signaling in plants.</title>
        <authorList>
            <person name="Boernke F."/>
        </authorList>
    </citation>
    <scope>ERRATUM OF PUBMED:24600465</scope>
</reference>
<reference key="7">
    <citation type="journal article" date="2014" name="PLoS ONE">
        <title>DUF581 is plant specific FCS-like zinc finger involved in protein-protein interaction.</title>
        <authorList>
            <person name="Jamsheer K M."/>
            <person name="Laxmi A."/>
        </authorList>
    </citation>
    <scope>GENE FAMILY</scope>
    <scope>NOMENCLATURE</scope>
</reference>
<reference key="8">
    <citation type="journal article" date="2015" name="Front. Plant Sci.">
        <title>Expression of Arabidopsis FCS-Like Zinc finger genes is differentially regulated by sugars, cellular energy level, and abiotic stress.</title>
        <authorList>
            <person name="Jamsheer K M."/>
            <person name="Laxmi A."/>
        </authorList>
    </citation>
    <scope>INDUCTION</scope>
</reference>
<reference key="9">
    <citation type="journal article" date="2018" name="J. Biol. Chem.">
        <title>The FCS-like zinc finger scaffold of the kinase SnRK1 is formed by the coordinated actions of the FLZ domain and intrinsically disordered regions.</title>
        <authorList>
            <person name="Jamsheer K M."/>
            <person name="Shukla B.N."/>
            <person name="Jindal S."/>
            <person name="Gopan N."/>
            <person name="Mannully C.T."/>
            <person name="Laxmi A."/>
        </authorList>
    </citation>
    <scope>INTERACTION WITH KIN10 AND KIN11</scope>
    <scope>SUBUNIT</scope>
    <scope>SUBCELLULAR LOCATION</scope>
</reference>
<protein>
    <recommendedName>
        <fullName evidence="6">FCS-Like Zinc finger 11</fullName>
    </recommendedName>
</protein>